<protein>
    <recommendedName>
        <fullName evidence="1">Malate dehydrogenase</fullName>
        <ecNumber evidence="1">1.1.1.37</ecNumber>
    </recommendedName>
</protein>
<proteinExistence type="inferred from homology"/>
<sequence>MKVAVLGAAGGIGQALALLLKTQLPAGSHLSLYDIAPVTPGVAVDLSHIPTAVEIKGFAGEDPTPALVGADVVLISAGVARKPGMDRSDLFNINAGIVRNLIEKVAATCPTALVGIITNPVNTTVAIAAEVMKKAGVYDKNRLFGITTLDVIRSETFIAELKGLNVADVKVNVIGGHSGVTILPLLSQVEGVTFTDEEVASLTTRIQNAGTEVVEAKAGGGSATLSMGQAACRFGLSLVRGLQGEANIVECAYVDGGSEHAEFFAQPVLLGKNGIEKVLPYGEVSAFEANARDSMLDTLKGDIKLGVDFVK</sequence>
<reference key="1">
    <citation type="submission" date="2007-07" db="EMBL/GenBank/DDBJ databases">
        <title>Complete sequence of chromosome of Shewanella baltica OS185.</title>
        <authorList>
            <consortium name="US DOE Joint Genome Institute"/>
            <person name="Copeland A."/>
            <person name="Lucas S."/>
            <person name="Lapidus A."/>
            <person name="Barry K."/>
            <person name="Glavina del Rio T."/>
            <person name="Dalin E."/>
            <person name="Tice H."/>
            <person name="Pitluck S."/>
            <person name="Sims D."/>
            <person name="Brettin T."/>
            <person name="Bruce D."/>
            <person name="Detter J.C."/>
            <person name="Han C."/>
            <person name="Schmutz J."/>
            <person name="Larimer F."/>
            <person name="Land M."/>
            <person name="Hauser L."/>
            <person name="Kyrpides N."/>
            <person name="Mikhailova N."/>
            <person name="Brettar I."/>
            <person name="Rodrigues J."/>
            <person name="Konstantinidis K."/>
            <person name="Tiedje J."/>
            <person name="Richardson P."/>
        </authorList>
    </citation>
    <scope>NUCLEOTIDE SEQUENCE [LARGE SCALE GENOMIC DNA]</scope>
    <source>
        <strain>OS185</strain>
    </source>
</reference>
<gene>
    <name evidence="1" type="primary">mdh</name>
    <name type="ordered locus">Shew185_3685</name>
</gene>
<keyword id="KW-0520">NAD</keyword>
<keyword id="KW-0560">Oxidoreductase</keyword>
<keyword id="KW-0816">Tricarboxylic acid cycle</keyword>
<comment type="function">
    <text evidence="1">Catalyzes the reversible oxidation of malate to oxaloacetate.</text>
</comment>
<comment type="catalytic activity">
    <reaction evidence="1">
        <text>(S)-malate + NAD(+) = oxaloacetate + NADH + H(+)</text>
        <dbReference type="Rhea" id="RHEA:21432"/>
        <dbReference type="ChEBI" id="CHEBI:15378"/>
        <dbReference type="ChEBI" id="CHEBI:15589"/>
        <dbReference type="ChEBI" id="CHEBI:16452"/>
        <dbReference type="ChEBI" id="CHEBI:57540"/>
        <dbReference type="ChEBI" id="CHEBI:57945"/>
        <dbReference type="EC" id="1.1.1.37"/>
    </reaction>
</comment>
<comment type="subunit">
    <text evidence="1">Homodimer.</text>
</comment>
<comment type="similarity">
    <text evidence="1">Belongs to the LDH/MDH superfamily. MDH type 1 family.</text>
</comment>
<organism>
    <name type="scientific">Shewanella baltica (strain OS185)</name>
    <dbReference type="NCBI Taxonomy" id="402882"/>
    <lineage>
        <taxon>Bacteria</taxon>
        <taxon>Pseudomonadati</taxon>
        <taxon>Pseudomonadota</taxon>
        <taxon>Gammaproteobacteria</taxon>
        <taxon>Alteromonadales</taxon>
        <taxon>Shewanellaceae</taxon>
        <taxon>Shewanella</taxon>
    </lineage>
</organism>
<feature type="chain" id="PRO_1000068593" description="Malate dehydrogenase">
    <location>
        <begin position="1"/>
        <end position="311"/>
    </location>
</feature>
<feature type="active site" description="Proton acceptor" evidence="1">
    <location>
        <position position="177"/>
    </location>
</feature>
<feature type="binding site" evidence="1">
    <location>
        <begin position="7"/>
        <end position="13"/>
    </location>
    <ligand>
        <name>NAD(+)</name>
        <dbReference type="ChEBI" id="CHEBI:57540"/>
    </ligand>
</feature>
<feature type="binding site" evidence="1">
    <location>
        <position position="34"/>
    </location>
    <ligand>
        <name>NAD(+)</name>
        <dbReference type="ChEBI" id="CHEBI:57540"/>
    </ligand>
</feature>
<feature type="binding site" evidence="1">
    <location>
        <position position="81"/>
    </location>
    <ligand>
        <name>substrate</name>
    </ligand>
</feature>
<feature type="binding site" evidence="1">
    <location>
        <position position="87"/>
    </location>
    <ligand>
        <name>substrate</name>
    </ligand>
</feature>
<feature type="binding site" evidence="1">
    <location>
        <position position="94"/>
    </location>
    <ligand>
        <name>NAD(+)</name>
        <dbReference type="ChEBI" id="CHEBI:57540"/>
    </ligand>
</feature>
<feature type="binding site" evidence="1">
    <location>
        <begin position="117"/>
        <end position="119"/>
    </location>
    <ligand>
        <name>NAD(+)</name>
        <dbReference type="ChEBI" id="CHEBI:57540"/>
    </ligand>
</feature>
<feature type="binding site" evidence="1">
    <location>
        <position position="119"/>
    </location>
    <ligand>
        <name>substrate</name>
    </ligand>
</feature>
<feature type="binding site" evidence="1">
    <location>
        <position position="153"/>
    </location>
    <ligand>
        <name>substrate</name>
    </ligand>
</feature>
<feature type="binding site" evidence="1">
    <location>
        <position position="227"/>
    </location>
    <ligand>
        <name>NAD(+)</name>
        <dbReference type="ChEBI" id="CHEBI:57540"/>
    </ligand>
</feature>
<accession>A6WSM1</accession>
<evidence type="ECO:0000255" key="1">
    <source>
        <dbReference type="HAMAP-Rule" id="MF_01516"/>
    </source>
</evidence>
<dbReference type="EC" id="1.1.1.37" evidence="1"/>
<dbReference type="EMBL" id="CP000753">
    <property type="protein sequence ID" value="ABS09810.1"/>
    <property type="molecule type" value="Genomic_DNA"/>
</dbReference>
<dbReference type="RefSeq" id="WP_011845758.1">
    <property type="nucleotide sequence ID" value="NC_009665.1"/>
</dbReference>
<dbReference type="SMR" id="A6WSM1"/>
<dbReference type="KEGG" id="sbm:Shew185_3685"/>
<dbReference type="HOGENOM" id="CLU_047181_0_1_6"/>
<dbReference type="GO" id="GO:0005737">
    <property type="term" value="C:cytoplasm"/>
    <property type="evidence" value="ECO:0007669"/>
    <property type="project" value="TreeGrafter"/>
</dbReference>
<dbReference type="GO" id="GO:0030060">
    <property type="term" value="F:L-malate dehydrogenase (NAD+) activity"/>
    <property type="evidence" value="ECO:0007669"/>
    <property type="project" value="UniProtKB-UniRule"/>
</dbReference>
<dbReference type="GO" id="GO:0006108">
    <property type="term" value="P:malate metabolic process"/>
    <property type="evidence" value="ECO:0007669"/>
    <property type="project" value="InterPro"/>
</dbReference>
<dbReference type="GO" id="GO:0006099">
    <property type="term" value="P:tricarboxylic acid cycle"/>
    <property type="evidence" value="ECO:0007669"/>
    <property type="project" value="UniProtKB-UniRule"/>
</dbReference>
<dbReference type="CDD" id="cd01337">
    <property type="entry name" value="MDH_glyoxysomal_mitochondrial"/>
    <property type="match status" value="1"/>
</dbReference>
<dbReference type="FunFam" id="3.40.50.720:FF:000017">
    <property type="entry name" value="Malate dehydrogenase"/>
    <property type="match status" value="1"/>
</dbReference>
<dbReference type="FunFam" id="3.90.110.10:FF:000001">
    <property type="entry name" value="Malate dehydrogenase"/>
    <property type="match status" value="1"/>
</dbReference>
<dbReference type="Gene3D" id="3.90.110.10">
    <property type="entry name" value="Lactate dehydrogenase/glycoside hydrolase, family 4, C-terminal"/>
    <property type="match status" value="1"/>
</dbReference>
<dbReference type="Gene3D" id="3.40.50.720">
    <property type="entry name" value="NAD(P)-binding Rossmann-like Domain"/>
    <property type="match status" value="1"/>
</dbReference>
<dbReference type="HAMAP" id="MF_01516">
    <property type="entry name" value="Malate_dehydrog_1"/>
    <property type="match status" value="1"/>
</dbReference>
<dbReference type="InterPro" id="IPR001557">
    <property type="entry name" value="L-lactate/malate_DH"/>
</dbReference>
<dbReference type="InterPro" id="IPR022383">
    <property type="entry name" value="Lactate/malate_DH_C"/>
</dbReference>
<dbReference type="InterPro" id="IPR001236">
    <property type="entry name" value="Lactate/malate_DH_N"/>
</dbReference>
<dbReference type="InterPro" id="IPR015955">
    <property type="entry name" value="Lactate_DH/Glyco_Ohase_4_C"/>
</dbReference>
<dbReference type="InterPro" id="IPR001252">
    <property type="entry name" value="Malate_DH_AS"/>
</dbReference>
<dbReference type="InterPro" id="IPR010097">
    <property type="entry name" value="Malate_DH_type1"/>
</dbReference>
<dbReference type="InterPro" id="IPR023958">
    <property type="entry name" value="Malate_DH_type1_bac"/>
</dbReference>
<dbReference type="InterPro" id="IPR036291">
    <property type="entry name" value="NAD(P)-bd_dom_sf"/>
</dbReference>
<dbReference type="NCBIfam" id="TIGR01772">
    <property type="entry name" value="MDH_euk_gproteo"/>
    <property type="match status" value="1"/>
</dbReference>
<dbReference type="PANTHER" id="PTHR11540">
    <property type="entry name" value="MALATE AND LACTATE DEHYDROGENASE"/>
    <property type="match status" value="1"/>
</dbReference>
<dbReference type="PANTHER" id="PTHR11540:SF16">
    <property type="entry name" value="MALATE DEHYDROGENASE, MITOCHONDRIAL"/>
    <property type="match status" value="1"/>
</dbReference>
<dbReference type="Pfam" id="PF02866">
    <property type="entry name" value="Ldh_1_C"/>
    <property type="match status" value="1"/>
</dbReference>
<dbReference type="Pfam" id="PF00056">
    <property type="entry name" value="Ldh_1_N"/>
    <property type="match status" value="1"/>
</dbReference>
<dbReference type="PIRSF" id="PIRSF000102">
    <property type="entry name" value="Lac_mal_DH"/>
    <property type="match status" value="1"/>
</dbReference>
<dbReference type="SUPFAM" id="SSF56327">
    <property type="entry name" value="LDH C-terminal domain-like"/>
    <property type="match status" value="1"/>
</dbReference>
<dbReference type="SUPFAM" id="SSF51735">
    <property type="entry name" value="NAD(P)-binding Rossmann-fold domains"/>
    <property type="match status" value="1"/>
</dbReference>
<dbReference type="PROSITE" id="PS00068">
    <property type="entry name" value="MDH"/>
    <property type="match status" value="1"/>
</dbReference>
<name>MDH_SHEB8</name>